<proteinExistence type="inferred from homology"/>
<gene>
    <name evidence="1" type="primary">ndhH</name>
</gene>
<reference key="1">
    <citation type="journal article" date="2005" name="Mol. Biol. Evol.">
        <title>Analysis of Acorus calamus chloroplast genome and its phylogenetic implications.</title>
        <authorList>
            <person name="Goremykin V.V."/>
            <person name="Holland B."/>
            <person name="Hirsch-Ernst K.I."/>
            <person name="Hellwig F.H."/>
        </authorList>
    </citation>
    <scope>NUCLEOTIDE SEQUENCE [LARGE SCALE GENOMIC DNA]</scope>
</reference>
<geneLocation type="chloroplast"/>
<evidence type="ECO:0000255" key="1">
    <source>
        <dbReference type="HAMAP-Rule" id="MF_01358"/>
    </source>
</evidence>
<evidence type="ECO:0000305" key="2"/>
<organism>
    <name type="scientific">Acorus calamus</name>
    <name type="common">Sweet flag</name>
    <dbReference type="NCBI Taxonomy" id="4465"/>
    <lineage>
        <taxon>Eukaryota</taxon>
        <taxon>Viridiplantae</taxon>
        <taxon>Streptophyta</taxon>
        <taxon>Embryophyta</taxon>
        <taxon>Tracheophyta</taxon>
        <taxon>Spermatophyta</taxon>
        <taxon>Magnoliopsida</taxon>
        <taxon>Liliopsida</taxon>
        <taxon>Acoraceae</taxon>
        <taxon>Acorus</taxon>
    </lineage>
</organism>
<keyword id="KW-0150">Chloroplast</keyword>
<keyword id="KW-0472">Membrane</keyword>
<keyword id="KW-0520">NAD</keyword>
<keyword id="KW-0521">NADP</keyword>
<keyword id="KW-0934">Plastid</keyword>
<keyword id="KW-0618">Plastoquinone</keyword>
<keyword id="KW-0874">Quinone</keyword>
<keyword id="KW-0793">Thylakoid</keyword>
<keyword id="KW-1278">Translocase</keyword>
<keyword id="KW-0813">Transport</keyword>
<accession>Q3V4X8</accession>
<name>NDHH_ACOCL</name>
<feature type="chain" id="PRO_0000357959" description="NAD(P)H-quinone oxidoreductase subunit H, chloroplastic">
    <location>
        <begin position="1"/>
        <end position="393"/>
    </location>
</feature>
<comment type="function">
    <text evidence="1">NDH shuttles electrons from NAD(P)H:plastoquinone, via FMN and iron-sulfur (Fe-S) centers, to quinones in the photosynthetic chain and possibly in a chloroplast respiratory chain. The immediate electron acceptor for the enzyme in this species is believed to be plastoquinone. Couples the redox reaction to proton translocation, and thus conserves the redox energy in a proton gradient.</text>
</comment>
<comment type="catalytic activity">
    <reaction evidence="1">
        <text>a plastoquinone + NADH + (n+1) H(+)(in) = a plastoquinol + NAD(+) + n H(+)(out)</text>
        <dbReference type="Rhea" id="RHEA:42608"/>
        <dbReference type="Rhea" id="RHEA-COMP:9561"/>
        <dbReference type="Rhea" id="RHEA-COMP:9562"/>
        <dbReference type="ChEBI" id="CHEBI:15378"/>
        <dbReference type="ChEBI" id="CHEBI:17757"/>
        <dbReference type="ChEBI" id="CHEBI:57540"/>
        <dbReference type="ChEBI" id="CHEBI:57945"/>
        <dbReference type="ChEBI" id="CHEBI:62192"/>
    </reaction>
</comment>
<comment type="catalytic activity">
    <reaction evidence="1">
        <text>a plastoquinone + NADPH + (n+1) H(+)(in) = a plastoquinol + NADP(+) + n H(+)(out)</text>
        <dbReference type="Rhea" id="RHEA:42612"/>
        <dbReference type="Rhea" id="RHEA-COMP:9561"/>
        <dbReference type="Rhea" id="RHEA-COMP:9562"/>
        <dbReference type="ChEBI" id="CHEBI:15378"/>
        <dbReference type="ChEBI" id="CHEBI:17757"/>
        <dbReference type="ChEBI" id="CHEBI:57783"/>
        <dbReference type="ChEBI" id="CHEBI:58349"/>
        <dbReference type="ChEBI" id="CHEBI:62192"/>
    </reaction>
</comment>
<comment type="subunit">
    <text evidence="1">NDH is composed of at least 16 different subunits, 5 of which are encoded in the nucleus.</text>
</comment>
<comment type="subcellular location">
    <subcellularLocation>
        <location evidence="1">Plastid</location>
        <location evidence="1">Chloroplast thylakoid membrane</location>
        <topology evidence="1">Peripheral membrane protein</topology>
        <orientation evidence="1">Stromal side</orientation>
    </subcellularLocation>
</comment>
<comment type="similarity">
    <text evidence="1">Belongs to the complex I 49 kDa subunit family.</text>
</comment>
<comment type="sequence caution" evidence="2">
    <conflict type="erroneous initiation">
        <sequence resource="EMBL-CDS" id="CAI53850"/>
    </conflict>
</comment>
<sequence length="393" mass="45593">MTVPATRQDLMIVNMGPHHPSMHGVLRLIVTLDGEDVIDCEPILGYLHRGMEKIAENRTIIQYLPYVTRWDYLATMFTEAITVNGPEQLGNIQIPKRASYIRVIMLELSRIASHLLWLGPFMADIGAQTPFFYIFRERELIYDLFEAATGMRMMHNYFRIGGVAADLPYGWIDKCLDFCDYFLTGIVEYEKLITQNPIFLERVERVGIISGEEAINWGLSGPMLRASGIEWDLRKVDNYECYNEFDWEVQWQKEGDSLARYLVRISEMKESIKIIQQALEGIPGGPYENLEVRRFDKVKDSEWNDFEYRFISKKPSPTFELAKQELYVRVEAPKGELGIFLIGDNSVFPWRWKIRPPGFINLQILPQLVKRMKLADIMTILGSIDIIMGEVDR</sequence>
<protein>
    <recommendedName>
        <fullName evidence="1">NAD(P)H-quinone oxidoreductase subunit H, chloroplastic</fullName>
        <ecNumber evidence="1">7.1.1.-</ecNumber>
    </recommendedName>
    <alternativeName>
        <fullName>NAD(P)H dehydrogenase subunit H</fullName>
    </alternativeName>
    <alternativeName>
        <fullName evidence="1">NADH-plastoquinone oxidoreductase 49 kDa subunit</fullName>
    </alternativeName>
    <alternativeName>
        <fullName evidence="1">NADH-plastoquinone oxidoreductase subunit H</fullName>
    </alternativeName>
</protein>
<dbReference type="EC" id="7.1.1.-" evidence="1"/>
<dbReference type="EMBL" id="AJ879453">
    <property type="protein sequence ID" value="CAI53850.1"/>
    <property type="status" value="ALT_INIT"/>
    <property type="molecule type" value="Genomic_DNA"/>
</dbReference>
<dbReference type="RefSeq" id="YP_319819.2">
    <property type="nucleotide sequence ID" value="NC_007407.1"/>
</dbReference>
<dbReference type="SMR" id="Q3V4X8"/>
<dbReference type="GeneID" id="3677485"/>
<dbReference type="GO" id="GO:0009535">
    <property type="term" value="C:chloroplast thylakoid membrane"/>
    <property type="evidence" value="ECO:0007669"/>
    <property type="project" value="UniProtKB-SubCell"/>
</dbReference>
<dbReference type="GO" id="GO:0051287">
    <property type="term" value="F:NAD binding"/>
    <property type="evidence" value="ECO:0007669"/>
    <property type="project" value="InterPro"/>
</dbReference>
<dbReference type="GO" id="GO:0016655">
    <property type="term" value="F:oxidoreductase activity, acting on NAD(P)H, quinone or similar compound as acceptor"/>
    <property type="evidence" value="ECO:0007669"/>
    <property type="project" value="UniProtKB-UniRule"/>
</dbReference>
<dbReference type="GO" id="GO:0048038">
    <property type="term" value="F:quinone binding"/>
    <property type="evidence" value="ECO:0007669"/>
    <property type="project" value="UniProtKB-KW"/>
</dbReference>
<dbReference type="GO" id="GO:0019684">
    <property type="term" value="P:photosynthesis, light reaction"/>
    <property type="evidence" value="ECO:0007669"/>
    <property type="project" value="UniProtKB-UniRule"/>
</dbReference>
<dbReference type="FunFam" id="1.10.645.10:FF:000003">
    <property type="entry name" value="NAD(P)H-quinone oxidoreductase subunit H, chloroplastic"/>
    <property type="match status" value="1"/>
</dbReference>
<dbReference type="Gene3D" id="1.10.645.10">
    <property type="entry name" value="Cytochrome-c3 Hydrogenase, chain B"/>
    <property type="match status" value="1"/>
</dbReference>
<dbReference type="HAMAP" id="MF_01358">
    <property type="entry name" value="NDH1_NuoD"/>
    <property type="match status" value="1"/>
</dbReference>
<dbReference type="InterPro" id="IPR001135">
    <property type="entry name" value="NADH_Q_OxRdtase_suD"/>
</dbReference>
<dbReference type="InterPro" id="IPR014029">
    <property type="entry name" value="NADH_UbQ_OxRdtase_49kDa_CS"/>
</dbReference>
<dbReference type="InterPro" id="IPR022885">
    <property type="entry name" value="NDH1_su_D/H"/>
</dbReference>
<dbReference type="InterPro" id="IPR029014">
    <property type="entry name" value="NiFe-Hase_large"/>
</dbReference>
<dbReference type="NCBIfam" id="NF004739">
    <property type="entry name" value="PRK06075.1"/>
    <property type="match status" value="1"/>
</dbReference>
<dbReference type="NCBIfam" id="NF005649">
    <property type="entry name" value="PRK07415.1"/>
    <property type="match status" value="1"/>
</dbReference>
<dbReference type="PANTHER" id="PTHR11993:SF10">
    <property type="entry name" value="NADH DEHYDROGENASE [UBIQUINONE] IRON-SULFUR PROTEIN 2, MITOCHONDRIAL"/>
    <property type="match status" value="1"/>
</dbReference>
<dbReference type="PANTHER" id="PTHR11993">
    <property type="entry name" value="NADH-UBIQUINONE OXIDOREDUCTASE 49 KDA SUBUNIT"/>
    <property type="match status" value="1"/>
</dbReference>
<dbReference type="Pfam" id="PF00346">
    <property type="entry name" value="Complex1_49kDa"/>
    <property type="match status" value="1"/>
</dbReference>
<dbReference type="SUPFAM" id="SSF56762">
    <property type="entry name" value="HydB/Nqo4-like"/>
    <property type="match status" value="1"/>
</dbReference>
<dbReference type="PROSITE" id="PS00535">
    <property type="entry name" value="COMPLEX1_49K"/>
    <property type="match status" value="1"/>
</dbReference>